<feature type="chain" id="PRO_1000016717" description="Holliday junction resolvase RecU">
    <location>
        <begin position="1"/>
        <end position="200"/>
    </location>
</feature>
<feature type="region of interest" description="Disordered" evidence="2">
    <location>
        <begin position="1"/>
        <end position="25"/>
    </location>
</feature>
<feature type="binding site" evidence="1">
    <location>
        <position position="85"/>
    </location>
    <ligand>
        <name>Mg(2+)</name>
        <dbReference type="ChEBI" id="CHEBI:18420"/>
    </ligand>
</feature>
<feature type="binding site" evidence="1">
    <location>
        <position position="87"/>
    </location>
    <ligand>
        <name>Mg(2+)</name>
        <dbReference type="ChEBI" id="CHEBI:18420"/>
    </ligand>
</feature>
<feature type="binding site" evidence="1">
    <location>
        <position position="100"/>
    </location>
    <ligand>
        <name>Mg(2+)</name>
        <dbReference type="ChEBI" id="CHEBI:18420"/>
    </ligand>
</feature>
<feature type="binding site" evidence="1">
    <location>
        <position position="119"/>
    </location>
    <ligand>
        <name>Mg(2+)</name>
        <dbReference type="ChEBI" id="CHEBI:18420"/>
    </ligand>
</feature>
<feature type="site" description="Transition state stabilizer" evidence="1">
    <location>
        <position position="102"/>
    </location>
</feature>
<keyword id="KW-0963">Cytoplasm</keyword>
<keyword id="KW-0227">DNA damage</keyword>
<keyword id="KW-0233">DNA recombination</keyword>
<keyword id="KW-0234">DNA repair</keyword>
<keyword id="KW-0255">Endonuclease</keyword>
<keyword id="KW-0378">Hydrolase</keyword>
<keyword id="KW-0460">Magnesium</keyword>
<keyword id="KW-0479">Metal-binding</keyword>
<keyword id="KW-0540">Nuclease</keyword>
<organism>
    <name type="scientific">Bacillus cereus (strain ATCC 10987 / NRS 248)</name>
    <dbReference type="NCBI Taxonomy" id="222523"/>
    <lineage>
        <taxon>Bacteria</taxon>
        <taxon>Bacillati</taxon>
        <taxon>Bacillota</taxon>
        <taxon>Bacilli</taxon>
        <taxon>Bacillales</taxon>
        <taxon>Bacillaceae</taxon>
        <taxon>Bacillus</taxon>
        <taxon>Bacillus cereus group</taxon>
    </lineage>
</organism>
<reference key="1">
    <citation type="journal article" date="2004" name="Nucleic Acids Res.">
        <title>The genome sequence of Bacillus cereus ATCC 10987 reveals metabolic adaptations and a large plasmid related to Bacillus anthracis pXO1.</title>
        <authorList>
            <person name="Rasko D.A."/>
            <person name="Ravel J."/>
            <person name="Oekstad O.A."/>
            <person name="Helgason E."/>
            <person name="Cer R.Z."/>
            <person name="Jiang L."/>
            <person name="Shores K.A."/>
            <person name="Fouts D.E."/>
            <person name="Tourasse N.J."/>
            <person name="Angiuoli S.V."/>
            <person name="Kolonay J.F."/>
            <person name="Nelson W.C."/>
            <person name="Kolstoe A.-B."/>
            <person name="Fraser C.M."/>
            <person name="Read T.D."/>
        </authorList>
    </citation>
    <scope>NUCLEOTIDE SEQUENCE [LARGE SCALE GENOMIC DNA]</scope>
    <source>
        <strain>ATCC 10987 / NRS 248</strain>
    </source>
</reference>
<sequence length="200" mass="23313">MTIRYPNGKRYNQASQPHKTPIKKHTYSNRGMSLEEELNETNEYYLTHNIACVHKKPTPLQIVKVDYPARSAAVVKEAYFKQPSTTDYNGVYKGKYIDFEAKETKNKTSFPLQNFHLHQIEHMKQVIAHNGIAFVIIKFTLFDELYLLDAKHIIAFWNRQNTGGRKSITKEEIVEHGSLLSCGYHPRIDYIRVLDTVYFS</sequence>
<comment type="function">
    <text evidence="1">Endonuclease that resolves Holliday junction intermediates in genetic recombination. Cleaves mobile four-strand junctions by introducing symmetrical nicks in paired strands. Promotes annealing of linear ssDNA with homologous dsDNA. Required for DNA repair, homologous recombination and chromosome segregation.</text>
</comment>
<comment type="catalytic activity">
    <reaction evidence="1">
        <text>Endonucleolytic cleavage at a junction such as a reciprocal single-stranded crossover between two homologous DNA duplexes (Holliday junction).</text>
        <dbReference type="EC" id="3.1.21.10"/>
    </reaction>
</comment>
<comment type="cofactor">
    <cofactor evidence="1">
        <name>Mg(2+)</name>
        <dbReference type="ChEBI" id="CHEBI:18420"/>
    </cofactor>
    <text evidence="1">Binds 1 Mg(2+) ion per subunit.</text>
</comment>
<comment type="subcellular location">
    <subcellularLocation>
        <location evidence="1">Cytoplasm</location>
    </subcellularLocation>
</comment>
<comment type="similarity">
    <text evidence="1">Belongs to the RecU family.</text>
</comment>
<gene>
    <name evidence="1" type="primary">recU</name>
    <name type="ordered locus">BCE_1679</name>
</gene>
<protein>
    <recommendedName>
        <fullName evidence="1">Holliday junction resolvase RecU</fullName>
        <ecNumber evidence="1">3.1.21.10</ecNumber>
    </recommendedName>
    <alternativeName>
        <fullName evidence="1">Recombination protein U homolog</fullName>
    </alternativeName>
</protein>
<accession>Q73AU3</accession>
<proteinExistence type="inferred from homology"/>
<dbReference type="EC" id="3.1.21.10" evidence="1"/>
<dbReference type="EMBL" id="AE017194">
    <property type="protein sequence ID" value="AAS40608.1"/>
    <property type="molecule type" value="Genomic_DNA"/>
</dbReference>
<dbReference type="SMR" id="Q73AU3"/>
<dbReference type="KEGG" id="bca:BCE_1679"/>
<dbReference type="HOGENOM" id="CLU_096340_0_0_9"/>
<dbReference type="Proteomes" id="UP000002527">
    <property type="component" value="Chromosome"/>
</dbReference>
<dbReference type="GO" id="GO:0005737">
    <property type="term" value="C:cytoplasm"/>
    <property type="evidence" value="ECO:0007669"/>
    <property type="project" value="UniProtKB-SubCell"/>
</dbReference>
<dbReference type="GO" id="GO:0004519">
    <property type="term" value="F:endonuclease activity"/>
    <property type="evidence" value="ECO:0007669"/>
    <property type="project" value="UniProtKB-UniRule"/>
</dbReference>
<dbReference type="GO" id="GO:0000287">
    <property type="term" value="F:magnesium ion binding"/>
    <property type="evidence" value="ECO:0007669"/>
    <property type="project" value="UniProtKB-UniRule"/>
</dbReference>
<dbReference type="GO" id="GO:0003676">
    <property type="term" value="F:nucleic acid binding"/>
    <property type="evidence" value="ECO:0007669"/>
    <property type="project" value="InterPro"/>
</dbReference>
<dbReference type="GO" id="GO:0007059">
    <property type="term" value="P:chromosome segregation"/>
    <property type="evidence" value="ECO:0007669"/>
    <property type="project" value="UniProtKB-UniRule"/>
</dbReference>
<dbReference type="GO" id="GO:0006310">
    <property type="term" value="P:DNA recombination"/>
    <property type="evidence" value="ECO:0007669"/>
    <property type="project" value="UniProtKB-UniRule"/>
</dbReference>
<dbReference type="GO" id="GO:0006281">
    <property type="term" value="P:DNA repair"/>
    <property type="evidence" value="ECO:0007669"/>
    <property type="project" value="UniProtKB-UniRule"/>
</dbReference>
<dbReference type="CDD" id="cd22354">
    <property type="entry name" value="RecU-like"/>
    <property type="match status" value="1"/>
</dbReference>
<dbReference type="Gene3D" id="3.40.1350.10">
    <property type="match status" value="1"/>
</dbReference>
<dbReference type="HAMAP" id="MF_00130">
    <property type="entry name" value="RecU"/>
    <property type="match status" value="1"/>
</dbReference>
<dbReference type="InterPro" id="IPR004612">
    <property type="entry name" value="Resolv_RecU"/>
</dbReference>
<dbReference type="InterPro" id="IPR011335">
    <property type="entry name" value="Restrct_endonuc-II-like"/>
</dbReference>
<dbReference type="InterPro" id="IPR011856">
    <property type="entry name" value="tRNA_endonuc-like_dom_sf"/>
</dbReference>
<dbReference type="NCBIfam" id="NF002581">
    <property type="entry name" value="PRK02234.1-2"/>
    <property type="match status" value="1"/>
</dbReference>
<dbReference type="NCBIfam" id="NF002584">
    <property type="entry name" value="PRK02234.1-5"/>
    <property type="match status" value="1"/>
</dbReference>
<dbReference type="NCBIfam" id="NF002585">
    <property type="entry name" value="PRK02234.1-6"/>
    <property type="match status" value="1"/>
</dbReference>
<dbReference type="NCBIfam" id="TIGR00648">
    <property type="entry name" value="recU"/>
    <property type="match status" value="1"/>
</dbReference>
<dbReference type="Pfam" id="PF03838">
    <property type="entry name" value="RecU"/>
    <property type="match status" value="1"/>
</dbReference>
<dbReference type="PIRSF" id="PIRSF037785">
    <property type="entry name" value="RecU"/>
    <property type="match status" value="1"/>
</dbReference>
<dbReference type="SUPFAM" id="SSF52980">
    <property type="entry name" value="Restriction endonuclease-like"/>
    <property type="match status" value="1"/>
</dbReference>
<evidence type="ECO:0000255" key="1">
    <source>
        <dbReference type="HAMAP-Rule" id="MF_00130"/>
    </source>
</evidence>
<evidence type="ECO:0000256" key="2">
    <source>
        <dbReference type="SAM" id="MobiDB-lite"/>
    </source>
</evidence>
<name>RECU_BACC1</name>